<comment type="function">
    <text evidence="3">Involved in the degradation of specific anti-sigma factors, specifically RsiT. Involved in the regulation of extracytoplasmic function sigma factors expression. Seems to play a role in the resistance to antimicrobial peptides. Required for colonization or survival in the host cecum.</text>
</comment>
<comment type="subcellular location">
    <subcellularLocation>
        <location evidence="1">Cell membrane</location>
        <topology evidence="1">Multi-pass membrane protein</topology>
    </subcellularLocation>
</comment>
<comment type="disruption phenotype">
    <text evidence="3">Reduced expression of the extracytoplasmic function sigma factor genes csfT and csfU (5-fold in mutant in comparison to wild-type). Decreased virulence (30-fold less virulent than the wild-type).</text>
</comment>
<comment type="similarity">
    <text evidence="4">Belongs to the protease PrsW family.</text>
</comment>
<protein>
    <recommendedName>
        <fullName>Protease PrsW</fullName>
        <ecNumber>3.4.-.-</ecNumber>
    </recommendedName>
</protein>
<feature type="chain" id="PRO_0000419803" description="Protease PrsW">
    <location>
        <begin position="1"/>
        <end position="238"/>
    </location>
</feature>
<feature type="transmembrane region" description="Helical" evidence="2">
    <location>
        <begin position="1"/>
        <end position="21"/>
    </location>
</feature>
<feature type="topological domain" description="Cytoplasmic" evidence="2">
    <location>
        <begin position="22"/>
        <end position="30"/>
    </location>
</feature>
<feature type="transmembrane region" description="Helical" evidence="2">
    <location>
        <begin position="31"/>
        <end position="51"/>
    </location>
</feature>
<feature type="topological domain" description="Extracellular" evidence="2">
    <location>
        <begin position="52"/>
        <end position="71"/>
    </location>
</feature>
<feature type="transmembrane region" description="Helical" evidence="2">
    <location>
        <begin position="72"/>
        <end position="92"/>
    </location>
</feature>
<feature type="topological domain" description="Cytoplasmic" evidence="2">
    <location>
        <begin position="93"/>
        <end position="103"/>
    </location>
</feature>
<feature type="transmembrane region" description="Helical" evidence="2">
    <location>
        <begin position="104"/>
        <end position="124"/>
    </location>
</feature>
<feature type="topological domain" description="Extracellular" evidence="2">
    <location>
        <begin position="125"/>
        <end position="138"/>
    </location>
</feature>
<feature type="transmembrane region" description="Helical" evidence="2">
    <location>
        <begin position="139"/>
        <end position="159"/>
    </location>
</feature>
<feature type="topological domain" description="Cytoplasmic" evidence="2">
    <location>
        <begin position="160"/>
        <end position="172"/>
    </location>
</feature>
<feature type="transmembrane region" description="Helical" evidence="2">
    <location>
        <begin position="173"/>
        <end position="193"/>
    </location>
</feature>
<feature type="topological domain" description="Extracellular" evidence="2">
    <location>
        <begin position="194"/>
        <end position="196"/>
    </location>
</feature>
<feature type="transmembrane region" description="Helical" evidence="2">
    <location>
        <begin position="197"/>
        <end position="217"/>
    </location>
</feature>
<feature type="topological domain" description="Cytoplasmic" evidence="2">
    <location>
        <begin position="218"/>
        <end position="238"/>
    </location>
</feature>
<name>PRSW_CLOD6</name>
<reference key="1">
    <citation type="journal article" date="2006" name="Nat. Genet.">
        <title>The multidrug-resistant human pathogen Clostridium difficile has a highly mobile, mosaic genome.</title>
        <authorList>
            <person name="Sebaihia M."/>
            <person name="Wren B.W."/>
            <person name="Mullany P."/>
            <person name="Fairweather N.F."/>
            <person name="Minton N."/>
            <person name="Stabler R."/>
            <person name="Thomson N.R."/>
            <person name="Roberts A.P."/>
            <person name="Cerdeno-Tarraga A.M."/>
            <person name="Wang H."/>
            <person name="Holden M.T.G."/>
            <person name="Wright A."/>
            <person name="Churcher C."/>
            <person name="Quail M.A."/>
            <person name="Baker S."/>
            <person name="Bason N."/>
            <person name="Brooks K."/>
            <person name="Chillingworth T."/>
            <person name="Cronin A."/>
            <person name="Davis P."/>
            <person name="Dowd L."/>
            <person name="Fraser A."/>
            <person name="Feltwell T."/>
            <person name="Hance Z."/>
            <person name="Holroyd S."/>
            <person name="Jagels K."/>
            <person name="Moule S."/>
            <person name="Mungall K."/>
            <person name="Price C."/>
            <person name="Rabbinowitsch E."/>
            <person name="Sharp S."/>
            <person name="Simmonds M."/>
            <person name="Stevens K."/>
            <person name="Unwin L."/>
            <person name="Whithead S."/>
            <person name="Dupuy B."/>
            <person name="Dougan G."/>
            <person name="Barrell B."/>
            <person name="Parkhill J."/>
        </authorList>
    </citation>
    <scope>NUCLEOTIDE SEQUENCE [LARGE SCALE GENOMIC DNA]</scope>
    <source>
        <strain>630</strain>
    </source>
</reference>
<reference key="2">
    <citation type="journal article" date="2011" name="Infect. Immun.">
        <title>PrsW is required for colonization, resistance to antimicrobial peptides, and expression of extracytoplasmic function sigma factors in Clostridium difficile.</title>
        <authorList>
            <person name="Ho T.D."/>
            <person name="Ellermeier C.D."/>
        </authorList>
    </citation>
    <scope>FUNCTION</scope>
    <scope>DISRUPTION PHENOTYPE</scope>
    <source>
        <strain>630</strain>
    </source>
</reference>
<evidence type="ECO:0000250" key="1"/>
<evidence type="ECO:0000255" key="2"/>
<evidence type="ECO:0000269" key="3">
    <source>
    </source>
</evidence>
<evidence type="ECO:0000305" key="4"/>
<accession>Q188Z4</accession>
<sequence>MKLDLFLLAIIPILIGMFWIRSKDRYCREPLIHLIKFFLIGAFLSVIIILLENLLMKFNVFEGYSELIYVSFVVAGLVEEGVKALILIPALIKEKHFTEKLDGIIYSVFLALGFATIENMVYIFSESRNLALQVGINRAVISIPAHVMFAITMGYYISKYKFEGNKNKRREYLFMAVLIPILLHGVFDFILMIEYRWAIILLIVYVIILWKINLDKLEKYMNHSKKVFFGNLRKKKKK</sequence>
<dbReference type="EC" id="3.4.-.-"/>
<dbReference type="EMBL" id="AM180355">
    <property type="protein sequence ID" value="CAJ67385.1"/>
    <property type="molecule type" value="Genomic_DNA"/>
</dbReference>
<dbReference type="RefSeq" id="WP_009901989.1">
    <property type="nucleotide sequence ID" value="NZ_JAUPES010000001.1"/>
</dbReference>
<dbReference type="RefSeq" id="YP_001087028.1">
    <property type="nucleotide sequence ID" value="NC_009089.1"/>
</dbReference>
<dbReference type="STRING" id="272563.CD630_05520"/>
<dbReference type="TCDB" id="9.B.217.1.4">
    <property type="family name" value="the transmembrane prsw protease (prsw) family"/>
</dbReference>
<dbReference type="EnsemblBacteria" id="CAJ67385">
    <property type="protein sequence ID" value="CAJ67385"/>
    <property type="gene ID" value="CD630_05520"/>
</dbReference>
<dbReference type="KEGG" id="cdf:CD630_05520"/>
<dbReference type="KEGG" id="pdc:CDIF630_00665"/>
<dbReference type="PATRIC" id="fig|272563.120.peg.562"/>
<dbReference type="eggNOG" id="COG2339">
    <property type="taxonomic scope" value="Bacteria"/>
</dbReference>
<dbReference type="OrthoDB" id="5504276at2"/>
<dbReference type="PhylomeDB" id="Q188Z4"/>
<dbReference type="BioCyc" id="PDIF272563:G12WB-664-MONOMER"/>
<dbReference type="Proteomes" id="UP000001978">
    <property type="component" value="Chromosome"/>
</dbReference>
<dbReference type="GO" id="GO:0005886">
    <property type="term" value="C:plasma membrane"/>
    <property type="evidence" value="ECO:0007669"/>
    <property type="project" value="UniProtKB-SubCell"/>
</dbReference>
<dbReference type="GO" id="GO:0008233">
    <property type="term" value="F:peptidase activity"/>
    <property type="evidence" value="ECO:0007669"/>
    <property type="project" value="UniProtKB-KW"/>
</dbReference>
<dbReference type="GO" id="GO:0006508">
    <property type="term" value="P:proteolysis"/>
    <property type="evidence" value="ECO:0007669"/>
    <property type="project" value="UniProtKB-KW"/>
</dbReference>
<dbReference type="GO" id="GO:0007165">
    <property type="term" value="P:signal transduction"/>
    <property type="evidence" value="ECO:0007669"/>
    <property type="project" value="UniProtKB-KW"/>
</dbReference>
<dbReference type="InterPro" id="IPR023596">
    <property type="entry name" value="Peptidase_PrsW_arch/bac"/>
</dbReference>
<dbReference type="InterPro" id="IPR026898">
    <property type="entry name" value="PrsW"/>
</dbReference>
<dbReference type="PANTHER" id="PTHR36844">
    <property type="entry name" value="PROTEASE PRSW"/>
    <property type="match status" value="1"/>
</dbReference>
<dbReference type="PANTHER" id="PTHR36844:SF1">
    <property type="entry name" value="PROTEASE PRSW"/>
    <property type="match status" value="1"/>
</dbReference>
<dbReference type="Pfam" id="PF13367">
    <property type="entry name" value="PrsW-protease"/>
    <property type="match status" value="1"/>
</dbReference>
<dbReference type="PIRSF" id="PIRSF016933">
    <property type="entry name" value="PrsW"/>
    <property type="match status" value="1"/>
</dbReference>
<proteinExistence type="inferred from homology"/>
<organism>
    <name type="scientific">Clostridioides difficile (strain 630)</name>
    <name type="common">Peptoclostridium difficile</name>
    <dbReference type="NCBI Taxonomy" id="272563"/>
    <lineage>
        <taxon>Bacteria</taxon>
        <taxon>Bacillati</taxon>
        <taxon>Bacillota</taxon>
        <taxon>Clostridia</taxon>
        <taxon>Peptostreptococcales</taxon>
        <taxon>Peptostreptococcaceae</taxon>
        <taxon>Clostridioides</taxon>
    </lineage>
</organism>
<keyword id="KW-1003">Cell membrane</keyword>
<keyword id="KW-0378">Hydrolase</keyword>
<keyword id="KW-0472">Membrane</keyword>
<keyword id="KW-0645">Protease</keyword>
<keyword id="KW-1185">Reference proteome</keyword>
<keyword id="KW-0807">Transducer</keyword>
<keyword id="KW-0812">Transmembrane</keyword>
<keyword id="KW-1133">Transmembrane helix</keyword>
<gene>
    <name type="primary">prsW</name>
    <name type="synonym">sleB</name>
    <name type="ordered locus">CD630_05520</name>
</gene>